<comment type="catalytic activity">
    <reaction evidence="1">
        <text>1-(5-phospho-beta-D-ribosyl)-5-[(5-phospho-beta-D-ribosylamino)methylideneamino]imidazole-4-carboxamide = 5-[(5-phospho-1-deoxy-D-ribulos-1-ylimino)methylamino]-1-(5-phospho-beta-D-ribosyl)imidazole-4-carboxamide</text>
        <dbReference type="Rhea" id="RHEA:15469"/>
        <dbReference type="ChEBI" id="CHEBI:58435"/>
        <dbReference type="ChEBI" id="CHEBI:58525"/>
        <dbReference type="EC" id="5.3.1.16"/>
    </reaction>
</comment>
<comment type="pathway">
    <text evidence="1">Amino-acid biosynthesis; L-histidine biosynthesis; L-histidine from 5-phospho-alpha-D-ribose 1-diphosphate: step 4/9.</text>
</comment>
<comment type="subcellular location">
    <subcellularLocation>
        <location evidence="1">Cytoplasm</location>
    </subcellularLocation>
</comment>
<comment type="similarity">
    <text evidence="1">Belongs to the HisA/HisF family.</text>
</comment>
<name>HIS4_ACIBC</name>
<sequence length="243" mass="26083">MLIIPAIDLKDGKCVRLKQGRMEDDTVFSDDPVATAQHWVNEGARRLHLVDLNGAFAGTPIHKPVVEAIAKAQPELPIQIGGGIRSLETIEHYLEAGVTFVIIGTKAVQEPEFVEEACKRFAGHIIVGIDAMNGMVATDGWANVTDVKATDLAKRFADAGVSSIVYTDIARDGMMQGVNVEQTVNLAQYSGLPVIASGGVTNLDDVRNLKGQPGILGAITGRAIYEGTLNLREAQLLLDENRL</sequence>
<dbReference type="EC" id="5.3.1.16" evidence="1"/>
<dbReference type="EMBL" id="CP000863">
    <property type="protein sequence ID" value="ACC58743.1"/>
    <property type="molecule type" value="Genomic_DNA"/>
</dbReference>
<dbReference type="RefSeq" id="WP_000905538.1">
    <property type="nucleotide sequence ID" value="NZ_CP031380.1"/>
</dbReference>
<dbReference type="SMR" id="B2I0N7"/>
<dbReference type="GeneID" id="92895476"/>
<dbReference type="KEGG" id="abc:ACICU_03434"/>
<dbReference type="HOGENOM" id="CLU_048577_1_1_6"/>
<dbReference type="UniPathway" id="UPA00031">
    <property type="reaction ID" value="UER00009"/>
</dbReference>
<dbReference type="Proteomes" id="UP000008839">
    <property type="component" value="Chromosome"/>
</dbReference>
<dbReference type="GO" id="GO:0005737">
    <property type="term" value="C:cytoplasm"/>
    <property type="evidence" value="ECO:0007669"/>
    <property type="project" value="UniProtKB-SubCell"/>
</dbReference>
<dbReference type="GO" id="GO:0003949">
    <property type="term" value="F:1-(5-phosphoribosyl)-5-[(5-phosphoribosylamino)methylideneamino]imidazole-4-carboxamide isomerase activity"/>
    <property type="evidence" value="ECO:0007669"/>
    <property type="project" value="UniProtKB-UniRule"/>
</dbReference>
<dbReference type="GO" id="GO:0000105">
    <property type="term" value="P:L-histidine biosynthetic process"/>
    <property type="evidence" value="ECO:0007669"/>
    <property type="project" value="UniProtKB-UniRule"/>
</dbReference>
<dbReference type="GO" id="GO:0000162">
    <property type="term" value="P:L-tryptophan biosynthetic process"/>
    <property type="evidence" value="ECO:0007669"/>
    <property type="project" value="TreeGrafter"/>
</dbReference>
<dbReference type="CDD" id="cd04732">
    <property type="entry name" value="HisA"/>
    <property type="match status" value="1"/>
</dbReference>
<dbReference type="FunFam" id="3.20.20.70:FF:000009">
    <property type="entry name" value="1-(5-phosphoribosyl)-5-[(5-phosphoribosylamino)methylideneamino] imidazole-4-carboxamide isomerase"/>
    <property type="match status" value="1"/>
</dbReference>
<dbReference type="Gene3D" id="3.20.20.70">
    <property type="entry name" value="Aldolase class I"/>
    <property type="match status" value="1"/>
</dbReference>
<dbReference type="HAMAP" id="MF_01014">
    <property type="entry name" value="HisA"/>
    <property type="match status" value="1"/>
</dbReference>
<dbReference type="InterPro" id="IPR013785">
    <property type="entry name" value="Aldolase_TIM"/>
</dbReference>
<dbReference type="InterPro" id="IPR006062">
    <property type="entry name" value="His_biosynth"/>
</dbReference>
<dbReference type="InterPro" id="IPR006063">
    <property type="entry name" value="HisA_bact_arch"/>
</dbReference>
<dbReference type="InterPro" id="IPR044524">
    <property type="entry name" value="Isoase_HisA-like"/>
</dbReference>
<dbReference type="InterPro" id="IPR023016">
    <property type="entry name" value="Isoase_HisA-like_bact"/>
</dbReference>
<dbReference type="InterPro" id="IPR011060">
    <property type="entry name" value="RibuloseP-bd_barrel"/>
</dbReference>
<dbReference type="NCBIfam" id="TIGR00007">
    <property type="entry name" value="1-(5-phosphoribosyl)-5-[(5-phosphoribosylamino)methylideneamino]imidazole-4-carboxamide isomerase"/>
    <property type="match status" value="1"/>
</dbReference>
<dbReference type="PANTHER" id="PTHR43090">
    <property type="entry name" value="1-(5-PHOSPHORIBOSYL)-5-[(5-PHOSPHORIBOSYLAMINO)METHYLIDENEAMINO] IMIDAZOLE-4-CARBOXAMIDE ISOMERASE"/>
    <property type="match status" value="1"/>
</dbReference>
<dbReference type="PANTHER" id="PTHR43090:SF2">
    <property type="entry name" value="1-(5-PHOSPHORIBOSYL)-5-[(5-PHOSPHORIBOSYLAMINO)METHYLIDENEAMINO] IMIDAZOLE-4-CARBOXAMIDE ISOMERASE"/>
    <property type="match status" value="1"/>
</dbReference>
<dbReference type="Pfam" id="PF00977">
    <property type="entry name" value="His_biosynth"/>
    <property type="match status" value="1"/>
</dbReference>
<dbReference type="SUPFAM" id="SSF51366">
    <property type="entry name" value="Ribulose-phoshate binding barrel"/>
    <property type="match status" value="1"/>
</dbReference>
<organism>
    <name type="scientific">Acinetobacter baumannii (strain ACICU)</name>
    <dbReference type="NCBI Taxonomy" id="405416"/>
    <lineage>
        <taxon>Bacteria</taxon>
        <taxon>Pseudomonadati</taxon>
        <taxon>Pseudomonadota</taxon>
        <taxon>Gammaproteobacteria</taxon>
        <taxon>Moraxellales</taxon>
        <taxon>Moraxellaceae</taxon>
        <taxon>Acinetobacter</taxon>
        <taxon>Acinetobacter calcoaceticus/baumannii complex</taxon>
    </lineage>
</organism>
<keyword id="KW-0028">Amino-acid biosynthesis</keyword>
<keyword id="KW-0963">Cytoplasm</keyword>
<keyword id="KW-0368">Histidine biosynthesis</keyword>
<keyword id="KW-0413">Isomerase</keyword>
<gene>
    <name evidence="1" type="primary">hisA</name>
    <name type="ordered locus">ACICU_03434</name>
</gene>
<protein>
    <recommendedName>
        <fullName evidence="1">1-(5-phosphoribosyl)-5-[(5-phosphoribosylamino)methylideneamino] imidazole-4-carboxamide isomerase</fullName>
        <ecNumber evidence="1">5.3.1.16</ecNumber>
    </recommendedName>
    <alternativeName>
        <fullName evidence="1">Phosphoribosylformimino-5-aminoimidazole carboxamide ribotide isomerase</fullName>
    </alternativeName>
</protein>
<proteinExistence type="inferred from homology"/>
<accession>B2I0N7</accession>
<reference key="1">
    <citation type="journal article" date="2008" name="Antimicrob. Agents Chemother.">
        <title>Whole-genome pyrosequencing of an epidemic multidrug-resistant Acinetobacter baumannii strain belonging to the European clone II group.</title>
        <authorList>
            <person name="Iacono M."/>
            <person name="Villa L."/>
            <person name="Fortini D."/>
            <person name="Bordoni R."/>
            <person name="Imperi F."/>
            <person name="Bonnal R.J."/>
            <person name="Sicheritz-Ponten T."/>
            <person name="De Bellis G."/>
            <person name="Visca P."/>
            <person name="Cassone A."/>
            <person name="Carattoli A."/>
        </authorList>
    </citation>
    <scope>NUCLEOTIDE SEQUENCE [LARGE SCALE GENOMIC DNA]</scope>
    <source>
        <strain>ACICU</strain>
    </source>
</reference>
<feature type="chain" id="PRO_1000135067" description="1-(5-phosphoribosyl)-5-[(5-phosphoribosylamino)methylideneamino] imidazole-4-carboxamide isomerase">
    <location>
        <begin position="1"/>
        <end position="243"/>
    </location>
</feature>
<feature type="active site" description="Proton acceptor" evidence="1">
    <location>
        <position position="8"/>
    </location>
</feature>
<feature type="active site" description="Proton donor" evidence="1">
    <location>
        <position position="130"/>
    </location>
</feature>
<evidence type="ECO:0000255" key="1">
    <source>
        <dbReference type="HAMAP-Rule" id="MF_01014"/>
    </source>
</evidence>